<dbReference type="EMBL" id="AP006840">
    <property type="protein sequence ID" value="BAD40456.1"/>
    <property type="molecule type" value="Genomic_DNA"/>
</dbReference>
<dbReference type="RefSeq" id="WP_011195601.1">
    <property type="nucleotide sequence ID" value="NC_006177.1"/>
</dbReference>
<dbReference type="SMR" id="Q67PD7"/>
<dbReference type="STRING" id="292459.STH1471"/>
<dbReference type="KEGG" id="sth:STH1471"/>
<dbReference type="eggNOG" id="COG0335">
    <property type="taxonomic scope" value="Bacteria"/>
</dbReference>
<dbReference type="HOGENOM" id="CLU_103507_2_1_9"/>
<dbReference type="OrthoDB" id="9803541at2"/>
<dbReference type="Proteomes" id="UP000000417">
    <property type="component" value="Chromosome"/>
</dbReference>
<dbReference type="GO" id="GO:0022625">
    <property type="term" value="C:cytosolic large ribosomal subunit"/>
    <property type="evidence" value="ECO:0007669"/>
    <property type="project" value="TreeGrafter"/>
</dbReference>
<dbReference type="GO" id="GO:0003735">
    <property type="term" value="F:structural constituent of ribosome"/>
    <property type="evidence" value="ECO:0007669"/>
    <property type="project" value="InterPro"/>
</dbReference>
<dbReference type="GO" id="GO:0006412">
    <property type="term" value="P:translation"/>
    <property type="evidence" value="ECO:0007669"/>
    <property type="project" value="UniProtKB-UniRule"/>
</dbReference>
<dbReference type="FunFam" id="2.30.30.790:FF:000001">
    <property type="entry name" value="50S ribosomal protein L19"/>
    <property type="match status" value="1"/>
</dbReference>
<dbReference type="Gene3D" id="2.30.30.790">
    <property type="match status" value="1"/>
</dbReference>
<dbReference type="HAMAP" id="MF_00402">
    <property type="entry name" value="Ribosomal_bL19"/>
    <property type="match status" value="1"/>
</dbReference>
<dbReference type="InterPro" id="IPR001857">
    <property type="entry name" value="Ribosomal_bL19"/>
</dbReference>
<dbReference type="InterPro" id="IPR018257">
    <property type="entry name" value="Ribosomal_bL19_CS"/>
</dbReference>
<dbReference type="InterPro" id="IPR038657">
    <property type="entry name" value="Ribosomal_bL19_sf"/>
</dbReference>
<dbReference type="InterPro" id="IPR008991">
    <property type="entry name" value="Translation_prot_SH3-like_sf"/>
</dbReference>
<dbReference type="NCBIfam" id="TIGR01024">
    <property type="entry name" value="rplS_bact"/>
    <property type="match status" value="1"/>
</dbReference>
<dbReference type="PANTHER" id="PTHR15680:SF9">
    <property type="entry name" value="LARGE RIBOSOMAL SUBUNIT PROTEIN BL19M"/>
    <property type="match status" value="1"/>
</dbReference>
<dbReference type="PANTHER" id="PTHR15680">
    <property type="entry name" value="RIBOSOMAL PROTEIN L19"/>
    <property type="match status" value="1"/>
</dbReference>
<dbReference type="Pfam" id="PF01245">
    <property type="entry name" value="Ribosomal_L19"/>
    <property type="match status" value="1"/>
</dbReference>
<dbReference type="PIRSF" id="PIRSF002191">
    <property type="entry name" value="Ribosomal_L19"/>
    <property type="match status" value="1"/>
</dbReference>
<dbReference type="PRINTS" id="PR00061">
    <property type="entry name" value="RIBOSOMALL19"/>
</dbReference>
<dbReference type="SUPFAM" id="SSF50104">
    <property type="entry name" value="Translation proteins SH3-like domain"/>
    <property type="match status" value="1"/>
</dbReference>
<dbReference type="PROSITE" id="PS01015">
    <property type="entry name" value="RIBOSOMAL_L19"/>
    <property type="match status" value="1"/>
</dbReference>
<reference key="1">
    <citation type="journal article" date="2004" name="Nucleic Acids Res.">
        <title>Genome sequence of Symbiobacterium thermophilum, an uncultivable bacterium that depends on microbial commensalism.</title>
        <authorList>
            <person name="Ueda K."/>
            <person name="Yamashita A."/>
            <person name="Ishikawa J."/>
            <person name="Shimada M."/>
            <person name="Watsuji T."/>
            <person name="Morimura K."/>
            <person name="Ikeda H."/>
            <person name="Hattori M."/>
            <person name="Beppu T."/>
        </authorList>
    </citation>
    <scope>NUCLEOTIDE SEQUENCE [LARGE SCALE GENOMIC DNA]</scope>
    <source>
        <strain>DSM 24528 / JCM 14929 / IAM 14863 / T</strain>
    </source>
</reference>
<protein>
    <recommendedName>
        <fullName evidence="1">Large ribosomal subunit protein bL19</fullName>
    </recommendedName>
    <alternativeName>
        <fullName evidence="2">50S ribosomal protein L19</fullName>
    </alternativeName>
</protein>
<name>RL19_SYMTH</name>
<organism>
    <name type="scientific">Symbiobacterium thermophilum (strain DSM 24528 / JCM 14929 / IAM 14863 / T)</name>
    <dbReference type="NCBI Taxonomy" id="292459"/>
    <lineage>
        <taxon>Bacteria</taxon>
        <taxon>Bacillati</taxon>
        <taxon>Bacillota</taxon>
        <taxon>Clostridia</taxon>
        <taxon>Eubacteriales</taxon>
        <taxon>Symbiobacteriaceae</taxon>
        <taxon>Symbiobacterium</taxon>
    </lineage>
</organism>
<keyword id="KW-1185">Reference proteome</keyword>
<keyword id="KW-0687">Ribonucleoprotein</keyword>
<keyword id="KW-0689">Ribosomal protein</keyword>
<gene>
    <name evidence="1" type="primary">rplS</name>
    <name type="ordered locus">STH1471</name>
</gene>
<evidence type="ECO:0000255" key="1">
    <source>
        <dbReference type="HAMAP-Rule" id="MF_00402"/>
    </source>
</evidence>
<evidence type="ECO:0000305" key="2"/>
<feature type="chain" id="PRO_0000163551" description="Large ribosomal subunit protein bL19">
    <location>
        <begin position="1"/>
        <end position="121"/>
    </location>
</feature>
<accession>Q67PD7</accession>
<sequence>MSDIIREIEREYMRSDIPAFRPGDTVRVNVKVVEGNRERIQAFEGVVIKRQGSGINETFTVRRVSYGVGVERTFPVHSPRLASIEVIRRGVVRRAKLYYLRERTGKAARIRERRLARPEEA</sequence>
<proteinExistence type="inferred from homology"/>
<comment type="function">
    <text evidence="1">This protein is located at the 30S-50S ribosomal subunit interface and may play a role in the structure and function of the aminoacyl-tRNA binding site.</text>
</comment>
<comment type="similarity">
    <text evidence="1">Belongs to the bacterial ribosomal protein bL19 family.</text>
</comment>